<dbReference type="EMBL" id="L42023">
    <property type="protein sequence ID" value="AAC22802.1"/>
    <property type="molecule type" value="Genomic_DNA"/>
</dbReference>
<dbReference type="PIR" id="H64167">
    <property type="entry name" value="H64167"/>
</dbReference>
<dbReference type="RefSeq" id="NP_439305.1">
    <property type="nucleotide sequence ID" value="NC_000907.1"/>
</dbReference>
<dbReference type="SMR" id="P45072"/>
<dbReference type="STRING" id="71421.HI_1147"/>
<dbReference type="EnsemblBacteria" id="AAC22802">
    <property type="protein sequence ID" value="AAC22802"/>
    <property type="gene ID" value="HI_1147"/>
</dbReference>
<dbReference type="KEGG" id="hin:HI_1147"/>
<dbReference type="PATRIC" id="fig|71421.8.peg.1197"/>
<dbReference type="eggNOG" id="COG1762">
    <property type="taxonomic scope" value="Bacteria"/>
</dbReference>
<dbReference type="HOGENOM" id="CLU_072531_5_2_6"/>
<dbReference type="OrthoDB" id="95460at2"/>
<dbReference type="PhylomeDB" id="P45072"/>
<dbReference type="BioCyc" id="HINF71421:G1GJ1-1180-MONOMER"/>
<dbReference type="Proteomes" id="UP000000579">
    <property type="component" value="Chromosome"/>
</dbReference>
<dbReference type="GO" id="GO:0030295">
    <property type="term" value="F:protein kinase activator activity"/>
    <property type="evidence" value="ECO:0000318"/>
    <property type="project" value="GO_Central"/>
</dbReference>
<dbReference type="GO" id="GO:0008982">
    <property type="term" value="F:protein-N(PI)-phosphohistidine-sugar phosphotransferase activity"/>
    <property type="evidence" value="ECO:0007669"/>
    <property type="project" value="InterPro"/>
</dbReference>
<dbReference type="GO" id="GO:0009401">
    <property type="term" value="P:phosphoenolpyruvate-dependent sugar phosphotransferase system"/>
    <property type="evidence" value="ECO:0007669"/>
    <property type="project" value="UniProtKB-KW"/>
</dbReference>
<dbReference type="CDD" id="cd00211">
    <property type="entry name" value="PTS_IIA_fru"/>
    <property type="match status" value="1"/>
</dbReference>
<dbReference type="Gene3D" id="3.40.930.10">
    <property type="entry name" value="Mannitol-specific EII, Chain A"/>
    <property type="match status" value="1"/>
</dbReference>
<dbReference type="InterPro" id="IPR016152">
    <property type="entry name" value="PTrfase/Anion_transptr"/>
</dbReference>
<dbReference type="InterPro" id="IPR002178">
    <property type="entry name" value="PTS_EIIA_type-2_dom"/>
</dbReference>
<dbReference type="InterPro" id="IPR006320">
    <property type="entry name" value="PTS_Nitro_regul"/>
</dbReference>
<dbReference type="InterPro" id="IPR051541">
    <property type="entry name" value="PTS_SugarTrans_NitroReg"/>
</dbReference>
<dbReference type="NCBIfam" id="TIGR01419">
    <property type="entry name" value="nitro_reg_IIA"/>
    <property type="match status" value="1"/>
</dbReference>
<dbReference type="PANTHER" id="PTHR47738:SF1">
    <property type="entry name" value="NITROGEN REGULATORY PROTEIN"/>
    <property type="match status" value="1"/>
</dbReference>
<dbReference type="PANTHER" id="PTHR47738">
    <property type="entry name" value="PTS SYSTEM FRUCTOSE-LIKE EIIA COMPONENT-RELATED"/>
    <property type="match status" value="1"/>
</dbReference>
<dbReference type="Pfam" id="PF00359">
    <property type="entry name" value="PTS_EIIA_2"/>
    <property type="match status" value="1"/>
</dbReference>
<dbReference type="SUPFAM" id="SSF55804">
    <property type="entry name" value="Phoshotransferase/anion transport protein"/>
    <property type="match status" value="1"/>
</dbReference>
<dbReference type="PROSITE" id="PS51094">
    <property type="entry name" value="PTS_EIIA_TYPE_2"/>
    <property type="match status" value="1"/>
</dbReference>
<gene>
    <name type="primary">ptsN</name>
    <name type="ordered locus">HI_1147</name>
</gene>
<keyword id="KW-0598">Phosphotransferase system</keyword>
<keyword id="KW-1185">Reference proteome</keyword>
<comment type="function">
    <text>Not known; lacks the phosphorylation site found in other PtsN proteins.</text>
</comment>
<accession>P45072</accession>
<reference key="1">
    <citation type="journal article" date="1995" name="Science">
        <title>Whole-genome random sequencing and assembly of Haemophilus influenzae Rd.</title>
        <authorList>
            <person name="Fleischmann R.D."/>
            <person name="Adams M.D."/>
            <person name="White O."/>
            <person name="Clayton R.A."/>
            <person name="Kirkness E.F."/>
            <person name="Kerlavage A.R."/>
            <person name="Bult C.J."/>
            <person name="Tomb J.-F."/>
            <person name="Dougherty B.A."/>
            <person name="Merrick J.M."/>
            <person name="McKenney K."/>
            <person name="Sutton G.G."/>
            <person name="FitzHugh W."/>
            <person name="Fields C.A."/>
            <person name="Gocayne J.D."/>
            <person name="Scott J.D."/>
            <person name="Shirley R."/>
            <person name="Liu L.-I."/>
            <person name="Glodek A."/>
            <person name="Kelley J.M."/>
            <person name="Weidman J.F."/>
            <person name="Phillips C.A."/>
            <person name="Spriggs T."/>
            <person name="Hedblom E."/>
            <person name="Cotton M.D."/>
            <person name="Utterback T.R."/>
            <person name="Hanna M.C."/>
            <person name="Nguyen D.T."/>
            <person name="Saudek D.M."/>
            <person name="Brandon R.C."/>
            <person name="Fine L.D."/>
            <person name="Fritchman J.L."/>
            <person name="Fuhrmann J.L."/>
            <person name="Geoghagen N.S.M."/>
            <person name="Gnehm C.L."/>
            <person name="McDonald L.A."/>
            <person name="Small K.V."/>
            <person name="Fraser C.M."/>
            <person name="Smith H.O."/>
            <person name="Venter J.C."/>
        </authorList>
    </citation>
    <scope>NUCLEOTIDE SEQUENCE [LARGE SCALE GENOMIC DNA]</scope>
    <source>
        <strain>ATCC 51907 / DSM 11121 / KW20 / Rd</strain>
    </source>
</reference>
<proteinExistence type="predicted"/>
<sequence>MKITELLSPENIRQGVSFSSKKRLFESIAHFVEEQILAEKGEQACFECLFEREKLGNSGLGNGIAMPKAKIPVTVSDKAIAVFMQLDNPIDYDAFDGKPVDLIFALLIPENQCETYIPVLASLIEKLTDKNVLKQLRSAKSADEIWQVFEITDQSETTFEEVKE</sequence>
<name>PTSN_HAEIN</name>
<feature type="chain" id="PRO_0000186698" description="Nitrogen regulatory protein homolog">
    <location>
        <begin position="1"/>
        <end position="164"/>
    </location>
</feature>
<feature type="domain" description="PTS EIIA type-2" evidence="1">
    <location>
        <begin position="5"/>
        <end position="152"/>
    </location>
</feature>
<evidence type="ECO:0000255" key="1">
    <source>
        <dbReference type="PROSITE-ProRule" id="PRU00417"/>
    </source>
</evidence>
<organism>
    <name type="scientific">Haemophilus influenzae (strain ATCC 51907 / DSM 11121 / KW20 / Rd)</name>
    <dbReference type="NCBI Taxonomy" id="71421"/>
    <lineage>
        <taxon>Bacteria</taxon>
        <taxon>Pseudomonadati</taxon>
        <taxon>Pseudomonadota</taxon>
        <taxon>Gammaproteobacteria</taxon>
        <taxon>Pasteurellales</taxon>
        <taxon>Pasteurellaceae</taxon>
        <taxon>Haemophilus</taxon>
    </lineage>
</organism>
<protein>
    <recommendedName>
        <fullName>Nitrogen regulatory protein homolog</fullName>
    </recommendedName>
    <domain>
        <recommendedName>
            <fullName>Putative phosphotransferase enzyme IIA component</fullName>
        </recommendedName>
        <alternativeName>
            <fullName>Putative PTS system EIIA component</fullName>
        </alternativeName>
    </domain>
</protein>